<keyword id="KW-0963">Cytoplasm</keyword>
<keyword id="KW-0489">Methyltransferase</keyword>
<keyword id="KW-0949">S-adenosyl-L-methionine</keyword>
<keyword id="KW-0808">Transferase</keyword>
<keyword id="KW-0819">tRNA processing</keyword>
<proteinExistence type="inferred from homology"/>
<reference key="1">
    <citation type="journal article" date="2009" name="Infect. Immun.">
        <title>Analysis of the genome of the Escherichia coli O157:H7 2006 spinach-associated outbreak isolate indicates candidate genes that may enhance virulence.</title>
        <authorList>
            <person name="Kulasekara B.R."/>
            <person name="Jacobs M."/>
            <person name="Zhou Y."/>
            <person name="Wu Z."/>
            <person name="Sims E."/>
            <person name="Saenphimmachak C."/>
            <person name="Rohmer L."/>
            <person name="Ritchie J.M."/>
            <person name="Radey M."/>
            <person name="McKevitt M."/>
            <person name="Freeman T.L."/>
            <person name="Hayden H."/>
            <person name="Haugen E."/>
            <person name="Gillett W."/>
            <person name="Fong C."/>
            <person name="Chang J."/>
            <person name="Beskhlebnaya V."/>
            <person name="Waldor M.K."/>
            <person name="Samadpour M."/>
            <person name="Whittam T.S."/>
            <person name="Kaul R."/>
            <person name="Brittnacher M."/>
            <person name="Miller S.I."/>
        </authorList>
    </citation>
    <scope>NUCLEOTIDE SEQUENCE [LARGE SCALE GENOMIC DNA]</scope>
    <source>
        <strain>TW14359 / EHEC</strain>
    </source>
</reference>
<accession>C6UQY1</accession>
<protein>
    <recommendedName>
        <fullName evidence="1">tRNA1(Val) (adenine(37)-N6)-methyltransferase</fullName>
        <ecNumber evidence="1">2.1.1.223</ecNumber>
    </recommendedName>
    <alternativeName>
        <fullName evidence="1">tRNA m6A37 methyltransferase</fullName>
    </alternativeName>
</protein>
<organism>
    <name type="scientific">Escherichia coli O157:H7 (strain TW14359 / EHEC)</name>
    <dbReference type="NCBI Taxonomy" id="544404"/>
    <lineage>
        <taxon>Bacteria</taxon>
        <taxon>Pseudomonadati</taxon>
        <taxon>Pseudomonadota</taxon>
        <taxon>Gammaproteobacteria</taxon>
        <taxon>Enterobacterales</taxon>
        <taxon>Enterobacteriaceae</taxon>
        <taxon>Escherichia</taxon>
    </lineage>
</organism>
<evidence type="ECO:0000255" key="1">
    <source>
        <dbReference type="HAMAP-Rule" id="MF_01872"/>
    </source>
</evidence>
<sequence length="245" mass="27215">MSQSTSVLRRNGFTFKQFFVAHDRCAMKAGTDGILLGAWAPVAGVKRCLDIGAGSGLLALMLAQRTSDSVIIDAVELESEAATQAQENVAQSPWLERINVHTADIQQWVTQQTARFDLIISNPPYYEQGVECATPQREQARYTTSLDHQTLLTCAAECITEEGFFCVVLPEQIGNSFTELALSMGWHLRLRTDVAENEARLPHRVLLAFSPQAGECFSDRLVIRGPDQNYSEAYTALTQAFYLFM</sequence>
<feature type="chain" id="PRO_0000387368" description="tRNA1(Val) (adenine(37)-N6)-methyltransferase">
    <location>
        <begin position="1"/>
        <end position="245"/>
    </location>
</feature>
<gene>
    <name evidence="1" type="primary">yfiC</name>
    <name type="ordered locus">ECSP_3521</name>
</gene>
<dbReference type="EC" id="2.1.1.223" evidence="1"/>
<dbReference type="EMBL" id="CP001368">
    <property type="protein sequence ID" value="ACT73287.1"/>
    <property type="molecule type" value="Genomic_DNA"/>
</dbReference>
<dbReference type="SMR" id="C6UQY1"/>
<dbReference type="KEGG" id="etw:ECSP_3521"/>
<dbReference type="HOGENOM" id="CLU_061983_0_0_6"/>
<dbReference type="GO" id="GO:0005737">
    <property type="term" value="C:cytoplasm"/>
    <property type="evidence" value="ECO:0007669"/>
    <property type="project" value="UniProtKB-SubCell"/>
</dbReference>
<dbReference type="GO" id="GO:0003676">
    <property type="term" value="F:nucleic acid binding"/>
    <property type="evidence" value="ECO:0007669"/>
    <property type="project" value="InterPro"/>
</dbReference>
<dbReference type="GO" id="GO:0016430">
    <property type="term" value="F:tRNA (adenine-N6)-methyltransferase activity"/>
    <property type="evidence" value="ECO:0007669"/>
    <property type="project" value="UniProtKB-UniRule"/>
</dbReference>
<dbReference type="GO" id="GO:0032259">
    <property type="term" value="P:methylation"/>
    <property type="evidence" value="ECO:0007669"/>
    <property type="project" value="UniProtKB-KW"/>
</dbReference>
<dbReference type="GO" id="GO:0008033">
    <property type="term" value="P:tRNA processing"/>
    <property type="evidence" value="ECO:0007669"/>
    <property type="project" value="UniProtKB-UniRule"/>
</dbReference>
<dbReference type="CDD" id="cd02440">
    <property type="entry name" value="AdoMet_MTases"/>
    <property type="match status" value="1"/>
</dbReference>
<dbReference type="Gene3D" id="3.40.50.150">
    <property type="entry name" value="Vaccinia Virus protein VP39"/>
    <property type="match status" value="1"/>
</dbReference>
<dbReference type="HAMAP" id="MF_01872">
    <property type="entry name" value="tRNA_methyltr_YfiC"/>
    <property type="match status" value="1"/>
</dbReference>
<dbReference type="InterPro" id="IPR002052">
    <property type="entry name" value="DNA_methylase_N6_adenine_CS"/>
</dbReference>
<dbReference type="InterPro" id="IPR029063">
    <property type="entry name" value="SAM-dependent_MTases_sf"/>
</dbReference>
<dbReference type="InterPro" id="IPR007848">
    <property type="entry name" value="Small_mtfrase_dom"/>
</dbReference>
<dbReference type="InterPro" id="IPR050210">
    <property type="entry name" value="tRNA_Adenine-N(6)_MTase"/>
</dbReference>
<dbReference type="InterPro" id="IPR022882">
    <property type="entry name" value="tRNA_adenine-N6_MeTrfase"/>
</dbReference>
<dbReference type="NCBIfam" id="NF047853">
    <property type="entry name" value="tRm6a37MtseTrmN"/>
    <property type="match status" value="1"/>
</dbReference>
<dbReference type="PANTHER" id="PTHR47739">
    <property type="entry name" value="TRNA1(VAL) (ADENINE(37)-N6)-METHYLTRANSFERASE"/>
    <property type="match status" value="1"/>
</dbReference>
<dbReference type="PANTHER" id="PTHR47739:SF1">
    <property type="entry name" value="TRNA1(VAL) (ADENINE(37)-N6)-METHYLTRANSFERASE"/>
    <property type="match status" value="1"/>
</dbReference>
<dbReference type="Pfam" id="PF05175">
    <property type="entry name" value="MTS"/>
    <property type="match status" value="1"/>
</dbReference>
<dbReference type="SUPFAM" id="SSF53335">
    <property type="entry name" value="S-adenosyl-L-methionine-dependent methyltransferases"/>
    <property type="match status" value="1"/>
</dbReference>
<dbReference type="PROSITE" id="PS00092">
    <property type="entry name" value="N6_MTASE"/>
    <property type="match status" value="1"/>
</dbReference>
<comment type="function">
    <text evidence="1">Specifically methylates the adenine in position 37 of tRNA(1)(Val) (anticodon cmo5UAC).</text>
</comment>
<comment type="catalytic activity">
    <reaction evidence="1">
        <text>adenosine(37) in tRNA1(Val) + S-adenosyl-L-methionine = N(6)-methyladenosine(37) in tRNA1(Val) + S-adenosyl-L-homocysteine + H(+)</text>
        <dbReference type="Rhea" id="RHEA:43160"/>
        <dbReference type="Rhea" id="RHEA-COMP:10369"/>
        <dbReference type="Rhea" id="RHEA-COMP:10370"/>
        <dbReference type="ChEBI" id="CHEBI:15378"/>
        <dbReference type="ChEBI" id="CHEBI:57856"/>
        <dbReference type="ChEBI" id="CHEBI:59789"/>
        <dbReference type="ChEBI" id="CHEBI:74411"/>
        <dbReference type="ChEBI" id="CHEBI:74449"/>
        <dbReference type="EC" id="2.1.1.223"/>
    </reaction>
</comment>
<comment type="subcellular location">
    <subcellularLocation>
        <location evidence="1">Cytoplasm</location>
    </subcellularLocation>
</comment>
<comment type="similarity">
    <text evidence="1">Belongs to the methyltransferase superfamily. tRNA (adenine-N(6)-)-methyltransferase family.</text>
</comment>
<name>TRMN6_ECO5T</name>